<comment type="function">
    <text evidence="1">Catalyzes the condensation of formaldehyde with tetrahydromethanopterin (H(4)MPT) to 5,10-methylenetetrahydromethanopterin.</text>
</comment>
<comment type="function">
    <text evidence="1">Catalyzes the reversible formation of ribulose-5-phosphate and formaldehyde from 3-hexulose-6-phosphate.</text>
</comment>
<comment type="catalytic activity">
    <reaction evidence="1">
        <text>5,6,7,8-tetrahydromethanopterin + formaldehyde = 5,10-methylenetetrahydromethanopterin + H2O</text>
        <dbReference type="Rhea" id="RHEA:24678"/>
        <dbReference type="ChEBI" id="CHEBI:15377"/>
        <dbReference type="ChEBI" id="CHEBI:16842"/>
        <dbReference type="ChEBI" id="CHEBI:57818"/>
        <dbReference type="ChEBI" id="CHEBI:58103"/>
        <dbReference type="EC" id="4.2.1.147"/>
    </reaction>
</comment>
<comment type="catalytic activity">
    <reaction evidence="1">
        <text>D-ribulose 5-phosphate + formaldehyde = D-arabino-hex-3-ulose 6-phosphate</text>
        <dbReference type="Rhea" id="RHEA:25201"/>
        <dbReference type="ChEBI" id="CHEBI:16842"/>
        <dbReference type="ChEBI" id="CHEBI:58121"/>
        <dbReference type="ChEBI" id="CHEBI:58542"/>
        <dbReference type="EC" id="4.1.2.43"/>
    </reaction>
</comment>
<comment type="pathway">
    <text evidence="1">Carbohydrate biosynthesis; D-ribose 5-phosphate biosynthesis.</text>
</comment>
<comment type="similarity">
    <text evidence="1">In the N-terminal section; belongs to the formaldehyde-activating enzyme family.</text>
</comment>
<comment type="similarity">
    <text evidence="1">In the C-terminal section; belongs to the HPS/KGPDC family. HPS subfamily.</text>
</comment>
<gene>
    <name evidence="1" type="primary">fae-hps</name>
    <name type="ordered locus">Mthe_0988</name>
</gene>
<dbReference type="EC" id="4.2.1.147" evidence="1"/>
<dbReference type="EC" id="4.1.2.43" evidence="1"/>
<dbReference type="EMBL" id="CP000477">
    <property type="protein sequence ID" value="ABK14773.1"/>
    <property type="molecule type" value="Genomic_DNA"/>
</dbReference>
<dbReference type="RefSeq" id="WP_011696167.1">
    <property type="nucleotide sequence ID" value="NC_008553.1"/>
</dbReference>
<dbReference type="SMR" id="A0B7U9"/>
<dbReference type="STRING" id="349307.Mthe_0988"/>
<dbReference type="GeneID" id="4462864"/>
<dbReference type="KEGG" id="mtp:Mthe_0988"/>
<dbReference type="HOGENOM" id="CLU_701335_0_0_2"/>
<dbReference type="OrthoDB" id="64276at2157"/>
<dbReference type="UniPathway" id="UPA00293"/>
<dbReference type="Proteomes" id="UP000000674">
    <property type="component" value="Chromosome"/>
</dbReference>
<dbReference type="GO" id="GO:0033982">
    <property type="term" value="F:3-dehydro-L-gulonate-6-phosphate decarboxylase activity"/>
    <property type="evidence" value="ECO:0007669"/>
    <property type="project" value="TreeGrafter"/>
</dbReference>
<dbReference type="GO" id="GO:0016840">
    <property type="term" value="F:carbon-nitrogen lyase activity"/>
    <property type="evidence" value="ECO:0007669"/>
    <property type="project" value="InterPro"/>
</dbReference>
<dbReference type="GO" id="GO:0043801">
    <property type="term" value="F:hexulose-6-phosphate synthase activity"/>
    <property type="evidence" value="ECO:0007669"/>
    <property type="project" value="UniProtKB-UniRule"/>
</dbReference>
<dbReference type="GO" id="GO:0016836">
    <property type="term" value="F:hydro-lyase activity"/>
    <property type="evidence" value="ECO:0007669"/>
    <property type="project" value="UniProtKB-UniRule"/>
</dbReference>
<dbReference type="GO" id="GO:0004590">
    <property type="term" value="F:orotidine-5'-phosphate decarboxylase activity"/>
    <property type="evidence" value="ECO:0007669"/>
    <property type="project" value="InterPro"/>
</dbReference>
<dbReference type="GO" id="GO:0006207">
    <property type="term" value="P:'de novo' pyrimidine nucleobase biosynthetic process"/>
    <property type="evidence" value="ECO:0007669"/>
    <property type="project" value="InterPro"/>
</dbReference>
<dbReference type="GO" id="GO:0016051">
    <property type="term" value="P:carbohydrate biosynthetic process"/>
    <property type="evidence" value="ECO:0007669"/>
    <property type="project" value="UniProtKB-UniRule"/>
</dbReference>
<dbReference type="GO" id="GO:0019854">
    <property type="term" value="P:L-ascorbic acid catabolic process"/>
    <property type="evidence" value="ECO:0007669"/>
    <property type="project" value="TreeGrafter"/>
</dbReference>
<dbReference type="CDD" id="cd04726">
    <property type="entry name" value="KGPDC_HPS"/>
    <property type="match status" value="1"/>
</dbReference>
<dbReference type="FunFam" id="3.30.230.60:FF:000001">
    <property type="entry name" value="5,6,7,8-tetrahydromethanopterin hydro-lyase"/>
    <property type="match status" value="1"/>
</dbReference>
<dbReference type="Gene3D" id="3.20.20.70">
    <property type="entry name" value="Aldolase class I"/>
    <property type="match status" value="1"/>
</dbReference>
<dbReference type="Gene3D" id="3.30.230.60">
    <property type="entry name" value="Formaldehyde-activating enzyme"/>
    <property type="match status" value="1"/>
</dbReference>
<dbReference type="HAMAP" id="MF_01268">
    <property type="entry name" value="Fae_Hps"/>
    <property type="match status" value="1"/>
</dbReference>
<dbReference type="InterPro" id="IPR013785">
    <property type="entry name" value="Aldolase_TIM"/>
</dbReference>
<dbReference type="InterPro" id="IPR020868">
    <property type="entry name" value="Fae/Hps"/>
</dbReference>
<dbReference type="InterPro" id="IPR014826">
    <property type="entry name" value="HCHO-activating_enzyme"/>
</dbReference>
<dbReference type="InterPro" id="IPR037075">
    <property type="entry name" value="HCHO-activating_enzyme_sf"/>
</dbReference>
<dbReference type="InterPro" id="IPR041710">
    <property type="entry name" value="HPS/KGPDC"/>
</dbReference>
<dbReference type="InterPro" id="IPR001754">
    <property type="entry name" value="OMPdeCOase_dom"/>
</dbReference>
<dbReference type="InterPro" id="IPR020568">
    <property type="entry name" value="Ribosomal_Su5_D2-typ_SF"/>
</dbReference>
<dbReference type="InterPro" id="IPR011060">
    <property type="entry name" value="RibuloseP-bd_barrel"/>
</dbReference>
<dbReference type="NCBIfam" id="TIGR03126">
    <property type="entry name" value="one_C_fae"/>
    <property type="match status" value="1"/>
</dbReference>
<dbReference type="NCBIfam" id="NF009833">
    <property type="entry name" value="PRK13307.1"/>
    <property type="match status" value="1"/>
</dbReference>
<dbReference type="PANTHER" id="PTHR35039">
    <property type="entry name" value="3-KETO-L-GULONATE-6-PHOSPHATE DECARBOXYLASE SGBH-RELATED"/>
    <property type="match status" value="1"/>
</dbReference>
<dbReference type="PANTHER" id="PTHR35039:SF3">
    <property type="entry name" value="3-KETO-L-GULONATE-6-PHOSPHATE DECARBOXYLASE SGBH-RELATED"/>
    <property type="match status" value="1"/>
</dbReference>
<dbReference type="Pfam" id="PF08714">
    <property type="entry name" value="Fae"/>
    <property type="match status" value="1"/>
</dbReference>
<dbReference type="Pfam" id="PF00215">
    <property type="entry name" value="OMPdecase"/>
    <property type="match status" value="1"/>
</dbReference>
<dbReference type="SMART" id="SM00934">
    <property type="entry name" value="OMPdecase"/>
    <property type="match status" value="1"/>
</dbReference>
<dbReference type="SUPFAM" id="SSF54211">
    <property type="entry name" value="Ribosomal protein S5 domain 2-like"/>
    <property type="match status" value="1"/>
</dbReference>
<dbReference type="SUPFAM" id="SSF51366">
    <property type="entry name" value="Ribulose-phoshate binding barrel"/>
    <property type="match status" value="1"/>
</dbReference>
<accession>A0B7U9</accession>
<feature type="chain" id="PRO_1000067325" description="Bifunctional enzyme Fae/Hps">
    <location>
        <begin position="1"/>
        <end position="392"/>
    </location>
</feature>
<feature type="region of interest" description="Formaldehyde-activating enzyme" evidence="1">
    <location>
        <begin position="1"/>
        <end position="161"/>
    </location>
</feature>
<feature type="region of interest" description="3-hexulose-6-phosphate synthase" evidence="1">
    <location>
        <begin position="162"/>
        <end position="392"/>
    </location>
</feature>
<feature type="active site" description="Proton donor" evidence="1">
    <location>
        <position position="17"/>
    </location>
</feature>
<feature type="binding site" evidence="1">
    <location>
        <position position="19"/>
    </location>
    <ligand>
        <name>substrate</name>
    </ligand>
</feature>
<feature type="binding site" evidence="1">
    <location>
        <position position="48"/>
    </location>
    <ligand>
        <name>substrate</name>
    </ligand>
</feature>
<feature type="binding site" evidence="1">
    <location>
        <position position="66"/>
    </location>
    <ligand>
        <name>substrate</name>
    </ligand>
</feature>
<feature type="binding site" evidence="1">
    <location>
        <position position="68"/>
    </location>
    <ligand>
        <name>substrate</name>
    </ligand>
</feature>
<feature type="binding site" evidence="1">
    <location>
        <position position="83"/>
    </location>
    <ligand>
        <name>substrate</name>
    </ligand>
</feature>
<proteinExistence type="inferred from homology"/>
<keyword id="KW-0119">Carbohydrate metabolism</keyword>
<keyword id="KW-0456">Lyase</keyword>
<keyword id="KW-0511">Multifunctional enzyme</keyword>
<keyword id="KW-1185">Reference proteome</keyword>
<sequence>MFLVGEALIGKEPEVAHIDLLIGDKNGPVGIAFANGLTQLSAGHTPLLSVIRPNLLAKPSTLIVPKVTVKNMEQAAIIFGPAQTAVAKAVADAVEEGVIPKERAEELVIIVSVFIHPDAKDYDAIYRYNYGATKLAIQRAMEGFPDVDKVLYEKERSVHPVMGYRVMRLWDPPYLQIAFDIVDLAEVKRVLSEIPESDHLLIEMGTPLVKMHGVQVVREVRRARPGSFVVLDLKTLDTGNLEVRLAADASADAVVISGLAPRKTIELAIKEAKKTGIYSIVDMLNVRDPVEVLRSLSVLPDVVELHRAIDMENSEHAWQSIPEIKSLGGKILVAVAGGIRVDNVRDALRAGADIIVVGRAITRSKDVRDMTEQFLSQLKKSEIDQYRIMTDF</sequence>
<organism>
    <name type="scientific">Methanothrix thermoacetophila (strain DSM 6194 / JCM 14653 / NBRC 101360 / PT)</name>
    <name type="common">Methanosaeta thermophila</name>
    <dbReference type="NCBI Taxonomy" id="349307"/>
    <lineage>
        <taxon>Archaea</taxon>
        <taxon>Methanobacteriati</taxon>
        <taxon>Methanobacteriota</taxon>
        <taxon>Stenosarchaea group</taxon>
        <taxon>Methanomicrobia</taxon>
        <taxon>Methanotrichales</taxon>
        <taxon>Methanotrichaceae</taxon>
        <taxon>Methanothrix</taxon>
    </lineage>
</organism>
<reference key="1">
    <citation type="submission" date="2006-10" db="EMBL/GenBank/DDBJ databases">
        <title>Complete sequence of Methanosaeta thermophila PT.</title>
        <authorList>
            <consortium name="US DOE Joint Genome Institute"/>
            <person name="Copeland A."/>
            <person name="Lucas S."/>
            <person name="Lapidus A."/>
            <person name="Barry K."/>
            <person name="Detter J.C."/>
            <person name="Glavina del Rio T."/>
            <person name="Hammon N."/>
            <person name="Israni S."/>
            <person name="Pitluck S."/>
            <person name="Chain P."/>
            <person name="Malfatti S."/>
            <person name="Shin M."/>
            <person name="Vergez L."/>
            <person name="Schmutz J."/>
            <person name="Larimer F."/>
            <person name="Land M."/>
            <person name="Hauser L."/>
            <person name="Kyrpides N."/>
            <person name="Kim E."/>
            <person name="Smith K.S."/>
            <person name="Ingram-Smith C."/>
            <person name="Richardson P."/>
        </authorList>
    </citation>
    <scope>NUCLEOTIDE SEQUENCE [LARGE SCALE GENOMIC DNA]</scope>
    <source>
        <strain>DSM 6194 / JCM 14653 / NBRC 101360 / PT</strain>
    </source>
</reference>
<protein>
    <recommendedName>
        <fullName evidence="1">Bifunctional enzyme Fae/Hps</fullName>
    </recommendedName>
    <domain>
        <recommendedName>
            <fullName evidence="1">5,6,7,8-tetrahydromethanopterin hydro-lyase</fullName>
            <ecNumber evidence="1">4.2.1.147</ecNumber>
        </recommendedName>
        <alternativeName>
            <fullName evidence="1">Formaldehyde-activating enzyme</fullName>
            <shortName evidence="1">Fae</shortName>
        </alternativeName>
    </domain>
    <domain>
        <recommendedName>
            <fullName evidence="1">3-hexulose-6-phosphate synthase</fullName>
            <shortName evidence="1">HPS</shortName>
            <ecNumber evidence="1">4.1.2.43</ecNumber>
        </recommendedName>
        <alternativeName>
            <fullName evidence="1">D-arabino-3-hexulose-6-phosphate formaldehyde lyase</fullName>
        </alternativeName>
    </domain>
</protein>
<evidence type="ECO:0000255" key="1">
    <source>
        <dbReference type="HAMAP-Rule" id="MF_01268"/>
    </source>
</evidence>
<name>FAEHP_METTP</name>